<organism>
    <name type="scientific">Francisella tularensis subsp. tularensis (strain FSC 198)</name>
    <dbReference type="NCBI Taxonomy" id="393115"/>
    <lineage>
        <taxon>Bacteria</taxon>
        <taxon>Pseudomonadati</taxon>
        <taxon>Pseudomonadota</taxon>
        <taxon>Gammaproteobacteria</taxon>
        <taxon>Thiotrichales</taxon>
        <taxon>Francisellaceae</taxon>
        <taxon>Francisella</taxon>
    </lineage>
</organism>
<comment type="function">
    <text evidence="1">Binds directly to 23S rRNA. The L1 stalk is quite mobile in the ribosome, and is involved in E site tRNA release.</text>
</comment>
<comment type="function">
    <text evidence="1">Protein L1 is also a translational repressor protein, it controls the translation of the L11 operon by binding to its mRNA.</text>
</comment>
<comment type="subunit">
    <text evidence="1">Part of the 50S ribosomal subunit.</text>
</comment>
<comment type="similarity">
    <text evidence="1">Belongs to the universal ribosomal protein uL1 family.</text>
</comment>
<gene>
    <name evidence="1" type="primary">rplA</name>
    <name type="ordered locus">FTF0141</name>
</gene>
<keyword id="KW-0678">Repressor</keyword>
<keyword id="KW-0687">Ribonucleoprotein</keyword>
<keyword id="KW-0689">Ribosomal protein</keyword>
<keyword id="KW-0694">RNA-binding</keyword>
<keyword id="KW-0699">rRNA-binding</keyword>
<keyword id="KW-0810">Translation regulation</keyword>
<keyword id="KW-0820">tRNA-binding</keyword>
<reference key="1">
    <citation type="journal article" date="2007" name="PLoS ONE">
        <title>Genome sequencing shows that European isolates of Francisella tularensis subspecies tularensis are almost identical to US laboratory strain Schu S4.</title>
        <authorList>
            <person name="Chaudhuri R.R."/>
            <person name="Ren C.-P."/>
            <person name="Desmond L."/>
            <person name="Vincent G.A."/>
            <person name="Silman N.J."/>
            <person name="Brehm J.K."/>
            <person name="Elmore M.J."/>
            <person name="Hudson M.J."/>
            <person name="Forsman M."/>
            <person name="Isherwood K.E."/>
            <person name="Gurycova D."/>
            <person name="Minton N.P."/>
            <person name="Titball R.W."/>
            <person name="Pallen M.J."/>
            <person name="Vipond R."/>
        </authorList>
    </citation>
    <scope>NUCLEOTIDE SEQUENCE [LARGE SCALE GENOMIC DNA]</scope>
    <source>
        <strain>FSC 198</strain>
    </source>
</reference>
<feature type="chain" id="PRO_0000308010" description="Large ribosomal subunit protein uL1">
    <location>
        <begin position="1"/>
        <end position="231"/>
    </location>
</feature>
<name>RL1_FRAT1</name>
<protein>
    <recommendedName>
        <fullName evidence="1">Large ribosomal subunit protein uL1</fullName>
    </recommendedName>
    <alternativeName>
        <fullName evidence="2">50S ribosomal protein L1</fullName>
    </alternativeName>
</protein>
<proteinExistence type="inferred from homology"/>
<dbReference type="EMBL" id="AM286280">
    <property type="protein sequence ID" value="CAL08157.1"/>
    <property type="molecule type" value="Genomic_DNA"/>
</dbReference>
<dbReference type="RefSeq" id="WP_003028678.1">
    <property type="nucleotide sequence ID" value="NC_008245.1"/>
</dbReference>
<dbReference type="SMR" id="Q14JT8"/>
<dbReference type="GeneID" id="75264697"/>
<dbReference type="KEGG" id="ftf:FTF0141"/>
<dbReference type="HOGENOM" id="CLU_062853_0_0_6"/>
<dbReference type="GO" id="GO:0022625">
    <property type="term" value="C:cytosolic large ribosomal subunit"/>
    <property type="evidence" value="ECO:0007669"/>
    <property type="project" value="TreeGrafter"/>
</dbReference>
<dbReference type="GO" id="GO:0019843">
    <property type="term" value="F:rRNA binding"/>
    <property type="evidence" value="ECO:0007669"/>
    <property type="project" value="UniProtKB-UniRule"/>
</dbReference>
<dbReference type="GO" id="GO:0003735">
    <property type="term" value="F:structural constituent of ribosome"/>
    <property type="evidence" value="ECO:0007669"/>
    <property type="project" value="InterPro"/>
</dbReference>
<dbReference type="GO" id="GO:0000049">
    <property type="term" value="F:tRNA binding"/>
    <property type="evidence" value="ECO:0007669"/>
    <property type="project" value="UniProtKB-KW"/>
</dbReference>
<dbReference type="GO" id="GO:0006417">
    <property type="term" value="P:regulation of translation"/>
    <property type="evidence" value="ECO:0007669"/>
    <property type="project" value="UniProtKB-KW"/>
</dbReference>
<dbReference type="GO" id="GO:0006412">
    <property type="term" value="P:translation"/>
    <property type="evidence" value="ECO:0007669"/>
    <property type="project" value="UniProtKB-UniRule"/>
</dbReference>
<dbReference type="CDD" id="cd00403">
    <property type="entry name" value="Ribosomal_L1"/>
    <property type="match status" value="1"/>
</dbReference>
<dbReference type="FunFam" id="3.40.50.790:FF:000001">
    <property type="entry name" value="50S ribosomal protein L1"/>
    <property type="match status" value="1"/>
</dbReference>
<dbReference type="Gene3D" id="3.30.190.20">
    <property type="match status" value="1"/>
</dbReference>
<dbReference type="Gene3D" id="3.40.50.790">
    <property type="match status" value="1"/>
</dbReference>
<dbReference type="HAMAP" id="MF_01318_B">
    <property type="entry name" value="Ribosomal_uL1_B"/>
    <property type="match status" value="1"/>
</dbReference>
<dbReference type="InterPro" id="IPR005878">
    <property type="entry name" value="Ribosom_uL1_bac-type"/>
</dbReference>
<dbReference type="InterPro" id="IPR002143">
    <property type="entry name" value="Ribosomal_uL1"/>
</dbReference>
<dbReference type="InterPro" id="IPR023674">
    <property type="entry name" value="Ribosomal_uL1-like"/>
</dbReference>
<dbReference type="InterPro" id="IPR028364">
    <property type="entry name" value="Ribosomal_uL1/biogenesis"/>
</dbReference>
<dbReference type="InterPro" id="IPR016095">
    <property type="entry name" value="Ribosomal_uL1_3-a/b-sand"/>
</dbReference>
<dbReference type="InterPro" id="IPR023673">
    <property type="entry name" value="Ribosomal_uL1_CS"/>
</dbReference>
<dbReference type="NCBIfam" id="TIGR01169">
    <property type="entry name" value="rplA_bact"/>
    <property type="match status" value="1"/>
</dbReference>
<dbReference type="PANTHER" id="PTHR36427">
    <property type="entry name" value="54S RIBOSOMAL PROTEIN L1, MITOCHONDRIAL"/>
    <property type="match status" value="1"/>
</dbReference>
<dbReference type="PANTHER" id="PTHR36427:SF3">
    <property type="entry name" value="LARGE RIBOSOMAL SUBUNIT PROTEIN UL1M"/>
    <property type="match status" value="1"/>
</dbReference>
<dbReference type="Pfam" id="PF00687">
    <property type="entry name" value="Ribosomal_L1"/>
    <property type="match status" value="1"/>
</dbReference>
<dbReference type="PIRSF" id="PIRSF002155">
    <property type="entry name" value="Ribosomal_L1"/>
    <property type="match status" value="1"/>
</dbReference>
<dbReference type="SUPFAM" id="SSF56808">
    <property type="entry name" value="Ribosomal protein L1"/>
    <property type="match status" value="1"/>
</dbReference>
<dbReference type="PROSITE" id="PS01199">
    <property type="entry name" value="RIBOSOMAL_L1"/>
    <property type="match status" value="1"/>
</dbReference>
<sequence length="231" mass="24496">MAKVSKRMKEISAKINAEKKYPVSEAFDLLREVSSVKFVESVDVSVALGVDPRKSDQVVRGASVLPNGTGKTVRVAVFAKGPAADAAKEAGAEVVGMEDLADEVKKGNMDFDVVIASPDSMRVVGQLGQILGPKGLMPNPKVGTVTMDVAKAVRDAKAGQVRYRVDKAGIIHTTIGKVNFTSDALKQNLEQLLTDLKKAKPAVSKGIYLKKVSVSSTMGPGINVDFSDLNI</sequence>
<accession>Q14JT8</accession>
<evidence type="ECO:0000255" key="1">
    <source>
        <dbReference type="HAMAP-Rule" id="MF_01318"/>
    </source>
</evidence>
<evidence type="ECO:0000305" key="2"/>